<sequence length="375" mass="43293">MESLSEGTTAGYQQIHDGIIHLVDSARTETVRSVNALMTATYQEIGRRIVEFEQGGEARAAYGAQLIKRLSKDLCLRYKRGFSAKNLRQMRLFYLFFQHVEIHQTMSGELTPLGIPQTPSAEFPSAKIWQTLSAKSFPLPRSTYVRLLSVKNADARSFYEKETLRCGWSVRQLERQIATQFYERTLLSHDKSAMLQQHAPAETHILPQQAIRDPFVLEFLELKDEYSESDFEEALINHLMDFMLELGDDFAFVGRQRRLRIDDNWFRVDLLFFHRRLRCLLIVDLKVGKFSYSDAGQMNMYLNYAKEHWTLPDENPPIGLVLCAEKGAGEAHYALAGLPNTVLASEYKMQLPDEKRLADELVRTQAVLEEGYRRR</sequence>
<name>YHCG_ECOLI</name>
<gene>
    <name type="primary">yhcG</name>
    <name type="ordered locus">b3220</name>
    <name type="ordered locus">JW3189</name>
</gene>
<accession>P45423</accession>
<accession>Q2M8Z3</accession>
<dbReference type="EC" id="3.1.-.-" evidence="2"/>
<dbReference type="EMBL" id="U18997">
    <property type="protein sequence ID" value="AAA58022.1"/>
    <property type="molecule type" value="Genomic_DNA"/>
</dbReference>
<dbReference type="EMBL" id="U00096">
    <property type="protein sequence ID" value="AAC76252.1"/>
    <property type="molecule type" value="Genomic_DNA"/>
</dbReference>
<dbReference type="EMBL" id="AP009048">
    <property type="protein sequence ID" value="BAE77263.1"/>
    <property type="molecule type" value="Genomic_DNA"/>
</dbReference>
<dbReference type="PIR" id="F65113">
    <property type="entry name" value="F65113"/>
</dbReference>
<dbReference type="RefSeq" id="NP_417687.1">
    <property type="nucleotide sequence ID" value="NC_000913.3"/>
</dbReference>
<dbReference type="RefSeq" id="WP_000445111.1">
    <property type="nucleotide sequence ID" value="NZ_LN832404.1"/>
</dbReference>
<dbReference type="SMR" id="P45423"/>
<dbReference type="BioGRID" id="4262441">
    <property type="interactions" value="21"/>
</dbReference>
<dbReference type="FunCoup" id="P45423">
    <property type="interactions" value="87"/>
</dbReference>
<dbReference type="IntAct" id="P45423">
    <property type="interactions" value="1"/>
</dbReference>
<dbReference type="STRING" id="511145.b3220"/>
<dbReference type="PaxDb" id="511145-b3220"/>
<dbReference type="EnsemblBacteria" id="AAC76252">
    <property type="protein sequence ID" value="AAC76252"/>
    <property type="gene ID" value="b3220"/>
</dbReference>
<dbReference type="GeneID" id="947739"/>
<dbReference type="KEGG" id="ecj:JW3189"/>
<dbReference type="KEGG" id="eco:b3220"/>
<dbReference type="PATRIC" id="fig|511145.12.peg.3316"/>
<dbReference type="EchoBASE" id="EB2664"/>
<dbReference type="eggNOG" id="COG4804">
    <property type="taxonomic scope" value="Bacteria"/>
</dbReference>
<dbReference type="HOGENOM" id="CLU_046640_1_1_6"/>
<dbReference type="InParanoid" id="P45423"/>
<dbReference type="OMA" id="CADKGHA"/>
<dbReference type="OrthoDB" id="9801263at2"/>
<dbReference type="PhylomeDB" id="P45423"/>
<dbReference type="BioCyc" id="EcoCyc:G7674-MONOMER"/>
<dbReference type="PRO" id="PR:P45423"/>
<dbReference type="Proteomes" id="UP000000625">
    <property type="component" value="Chromosome"/>
</dbReference>
<dbReference type="GO" id="GO:0003677">
    <property type="term" value="F:DNA binding"/>
    <property type="evidence" value="ECO:0007669"/>
    <property type="project" value="UniProtKB-KW"/>
</dbReference>
<dbReference type="GO" id="GO:0004518">
    <property type="term" value="F:nuclease activity"/>
    <property type="evidence" value="ECO:0007669"/>
    <property type="project" value="UniProtKB-KW"/>
</dbReference>
<dbReference type="Gene3D" id="3.40.1350.10">
    <property type="match status" value="1"/>
</dbReference>
<dbReference type="InterPro" id="IPR053148">
    <property type="entry name" value="PD-DEXK-like_domain"/>
</dbReference>
<dbReference type="InterPro" id="IPR011856">
    <property type="entry name" value="tRNA_endonuc-like_dom_sf"/>
</dbReference>
<dbReference type="InterPro" id="IPR009362">
    <property type="entry name" value="YhcG_C"/>
</dbReference>
<dbReference type="InterPro" id="IPR041527">
    <property type="entry name" value="YhcG_N"/>
</dbReference>
<dbReference type="PANTHER" id="PTHR30547:SF5">
    <property type="entry name" value="NUCLEASE YHCG-RELATED"/>
    <property type="match status" value="1"/>
</dbReference>
<dbReference type="PANTHER" id="PTHR30547">
    <property type="entry name" value="UNCHARACTERIZED PROTEIN YHCG-RELATED"/>
    <property type="match status" value="1"/>
</dbReference>
<dbReference type="Pfam" id="PF17761">
    <property type="entry name" value="DUF1016_N"/>
    <property type="match status" value="1"/>
</dbReference>
<dbReference type="Pfam" id="PF06250">
    <property type="entry name" value="YhcG_C"/>
    <property type="match status" value="1"/>
</dbReference>
<comment type="function">
    <text evidence="3 4">May be a nuclease involved in DNA recombination and repair.</text>
</comment>
<comment type="subunit">
    <text evidence="1">Interacts with DNA processing enzymes, including the restriction complex HsdMRS, the integrases IntF and IntS, and the recombinase PinE.</text>
</comment>
<comment type="domain">
    <text evidence="3">Possesses a PD-(D/E)XK-like nuclease domain.</text>
</comment>
<comment type="disruption phenotype">
    <text evidence="1">Deletion of this gene results in a synthetic-lethal phenotype when combined with hypomorphic alleles of the replicative primosome (dnaB), DNA polymerase III (dnaN), and DNA topoisomerase IV (parE).</text>
</comment>
<protein>
    <recommendedName>
        <fullName evidence="4">Putative nuclease YhcG</fullName>
        <ecNumber evidence="2">3.1.-.-</ecNumber>
    </recommendedName>
</protein>
<reference key="1">
    <citation type="journal article" date="1997" name="Science">
        <title>The complete genome sequence of Escherichia coli K-12.</title>
        <authorList>
            <person name="Blattner F.R."/>
            <person name="Plunkett G. III"/>
            <person name="Bloch C.A."/>
            <person name="Perna N.T."/>
            <person name="Burland V."/>
            <person name="Riley M."/>
            <person name="Collado-Vides J."/>
            <person name="Glasner J.D."/>
            <person name="Rode C.K."/>
            <person name="Mayhew G.F."/>
            <person name="Gregor J."/>
            <person name="Davis N.W."/>
            <person name="Kirkpatrick H.A."/>
            <person name="Goeden M.A."/>
            <person name="Rose D.J."/>
            <person name="Mau B."/>
            <person name="Shao Y."/>
        </authorList>
    </citation>
    <scope>NUCLEOTIDE SEQUENCE [LARGE SCALE GENOMIC DNA]</scope>
    <source>
        <strain>K12 / MG1655 / ATCC 47076</strain>
    </source>
</reference>
<reference key="2">
    <citation type="journal article" date="2006" name="Mol. Syst. Biol.">
        <title>Highly accurate genome sequences of Escherichia coli K-12 strains MG1655 and W3110.</title>
        <authorList>
            <person name="Hayashi K."/>
            <person name="Morooka N."/>
            <person name="Yamamoto Y."/>
            <person name="Fujita K."/>
            <person name="Isono K."/>
            <person name="Choi S."/>
            <person name="Ohtsubo E."/>
            <person name="Baba T."/>
            <person name="Wanner B.L."/>
            <person name="Mori H."/>
            <person name="Horiuchi T."/>
        </authorList>
    </citation>
    <scope>NUCLEOTIDE SEQUENCE [LARGE SCALE GENOMIC DNA]</scope>
    <source>
        <strain>K12 / W3110 / ATCC 27325 / DSM 5911</strain>
    </source>
</reference>
<reference key="3">
    <citation type="journal article" date="2005" name="BMC Bioinformatics">
        <title>The PD-(D/E)XK superfamily revisited: identification of new members among proteins involved in DNA metabolism and functional predictions for domains of (hitherto) unknown function.</title>
        <authorList>
            <person name="Kosinski J."/>
            <person name="Feder M."/>
            <person name="Bujnicki J.M."/>
        </authorList>
    </citation>
    <scope>PREDICTED FUNCTION</scope>
    <scope>DOMAIN</scope>
</reference>
<reference key="4">
    <citation type="journal article" date="2009" name="PLoS Biol.">
        <title>Global functional atlas of Escherichia coli encompassing previously uncharacterized proteins.</title>
        <authorList>
            <person name="Hu P."/>
            <person name="Janga S.C."/>
            <person name="Babu M."/>
            <person name="Diaz-Mejia J.J."/>
            <person name="Butland G."/>
            <person name="Yang W."/>
            <person name="Pogoutse O."/>
            <person name="Guo X."/>
            <person name="Phanse S."/>
            <person name="Wong P."/>
            <person name="Chandran S."/>
            <person name="Christopoulos C."/>
            <person name="Nazarians-Armavil A."/>
            <person name="Nasseri N.K."/>
            <person name="Musso G."/>
            <person name="Ali M."/>
            <person name="Nazemof N."/>
            <person name="Eroukova V."/>
            <person name="Golshani A."/>
            <person name="Paccanaro A."/>
            <person name="Greenblatt J.F."/>
            <person name="Moreno-Hagelsieb G."/>
            <person name="Emili A."/>
        </authorList>
    </citation>
    <scope>FUNCTION</scope>
    <scope>DISRUPTION PHENOTYPE</scope>
    <scope>IDENTIFICATION BY MASS SPECTROMETRY</scope>
    <scope>INTERACTION WITH DNA PROCESSING ENZYMES</scope>
    <source>
        <strain>K12 / W3110 / ATCC 27325 / DSM 5911</strain>
    </source>
</reference>
<keyword id="KW-0238">DNA-binding</keyword>
<keyword id="KW-0378">Hydrolase</keyword>
<keyword id="KW-0540">Nuclease</keyword>
<keyword id="KW-1185">Reference proteome</keyword>
<organism>
    <name type="scientific">Escherichia coli (strain K12)</name>
    <dbReference type="NCBI Taxonomy" id="83333"/>
    <lineage>
        <taxon>Bacteria</taxon>
        <taxon>Pseudomonadati</taxon>
        <taxon>Pseudomonadota</taxon>
        <taxon>Gammaproteobacteria</taxon>
        <taxon>Enterobacterales</taxon>
        <taxon>Enterobacteriaceae</taxon>
        <taxon>Escherichia</taxon>
    </lineage>
</organism>
<proteinExistence type="evidence at protein level"/>
<evidence type="ECO:0000269" key="1">
    <source>
    </source>
</evidence>
<evidence type="ECO:0000305" key="2"/>
<evidence type="ECO:0000305" key="3">
    <source>
    </source>
</evidence>
<evidence type="ECO:0000305" key="4">
    <source>
    </source>
</evidence>
<feature type="chain" id="PRO_0000169484" description="Putative nuclease YhcG">
    <location>
        <begin position="1"/>
        <end position="375"/>
    </location>
</feature>